<accession>A5UA73</accession>
<organism>
    <name type="scientific">Haemophilus influenzae (strain PittEE)</name>
    <dbReference type="NCBI Taxonomy" id="374930"/>
    <lineage>
        <taxon>Bacteria</taxon>
        <taxon>Pseudomonadati</taxon>
        <taxon>Pseudomonadota</taxon>
        <taxon>Gammaproteobacteria</taxon>
        <taxon>Pasteurellales</taxon>
        <taxon>Pasteurellaceae</taxon>
        <taxon>Haemophilus</taxon>
    </lineage>
</organism>
<keyword id="KW-0067">ATP-binding</keyword>
<keyword id="KW-0418">Kinase</keyword>
<keyword id="KW-0460">Magnesium</keyword>
<keyword id="KW-0479">Metal-binding</keyword>
<keyword id="KW-0547">Nucleotide-binding</keyword>
<keyword id="KW-0784">Thiamine biosynthesis</keyword>
<keyword id="KW-0808">Transferase</keyword>
<proteinExistence type="inferred from homology"/>
<reference key="1">
    <citation type="journal article" date="2007" name="Genome Biol.">
        <title>Characterization and modeling of the Haemophilus influenzae core and supragenomes based on the complete genomic sequences of Rd and 12 clinical nontypeable strains.</title>
        <authorList>
            <person name="Hogg J.S."/>
            <person name="Hu F.Z."/>
            <person name="Janto B."/>
            <person name="Boissy R."/>
            <person name="Hayes J."/>
            <person name="Keefe R."/>
            <person name="Post J.C."/>
            <person name="Ehrlich G.D."/>
        </authorList>
    </citation>
    <scope>NUCLEOTIDE SEQUENCE [LARGE SCALE GENOMIC DNA]</scope>
    <source>
        <strain>PittEE</strain>
    </source>
</reference>
<name>THIM_HAEIE</name>
<gene>
    <name evidence="1" type="primary">thiM</name>
    <name type="ordered locus">CGSHiEE_00920</name>
</gene>
<sequence length="263" mass="27636">MQSIYLAKIREQNPLIHNITNIVAANFSANGLLALGASPLMSANVEEMQEVPKISQALVINIGTLIGKDREAMLQAGKTANEVGIPVVLDPVGVGATSYRRETVRQLLAEVKFTLIRGNAGELAAIAGEAWQAKGVDAGKGEVDLKAVAEKVAQRYGCTALISGAVDIVSDGTQTATIHNGTPLFPKVTASGCLLSAVCAAFLAVSEGNYFSATLEACVAYTIAGERAAQSLTTQVGQFQIRLLDELAALSPETIRQRGRINE</sequence>
<feature type="chain" id="PRO_0000336558" description="Hydroxyethylthiazole kinase">
    <location>
        <begin position="1"/>
        <end position="263"/>
    </location>
</feature>
<feature type="binding site" evidence="1">
    <location>
        <position position="41"/>
    </location>
    <ligand>
        <name>substrate</name>
    </ligand>
</feature>
<feature type="binding site" evidence="1">
    <location>
        <position position="117"/>
    </location>
    <ligand>
        <name>ATP</name>
        <dbReference type="ChEBI" id="CHEBI:30616"/>
    </ligand>
</feature>
<feature type="binding site" evidence="1">
    <location>
        <position position="163"/>
    </location>
    <ligand>
        <name>ATP</name>
        <dbReference type="ChEBI" id="CHEBI:30616"/>
    </ligand>
</feature>
<feature type="binding site" evidence="1">
    <location>
        <position position="190"/>
    </location>
    <ligand>
        <name>substrate</name>
    </ligand>
</feature>
<evidence type="ECO:0000255" key="1">
    <source>
        <dbReference type="HAMAP-Rule" id="MF_00228"/>
    </source>
</evidence>
<comment type="function">
    <text evidence="1">Catalyzes the phosphorylation of the hydroxyl group of 4-methyl-5-beta-hydroxyethylthiazole (THZ).</text>
</comment>
<comment type="catalytic activity">
    <reaction evidence="1">
        <text>5-(2-hydroxyethyl)-4-methylthiazole + ATP = 4-methyl-5-(2-phosphooxyethyl)-thiazole + ADP + H(+)</text>
        <dbReference type="Rhea" id="RHEA:24212"/>
        <dbReference type="ChEBI" id="CHEBI:15378"/>
        <dbReference type="ChEBI" id="CHEBI:17957"/>
        <dbReference type="ChEBI" id="CHEBI:30616"/>
        <dbReference type="ChEBI" id="CHEBI:58296"/>
        <dbReference type="ChEBI" id="CHEBI:456216"/>
        <dbReference type="EC" id="2.7.1.50"/>
    </reaction>
</comment>
<comment type="cofactor">
    <cofactor evidence="1">
        <name>Mg(2+)</name>
        <dbReference type="ChEBI" id="CHEBI:18420"/>
    </cofactor>
</comment>
<comment type="pathway">
    <text evidence="1">Cofactor biosynthesis; thiamine diphosphate biosynthesis; 4-methyl-5-(2-phosphoethyl)-thiazole from 5-(2-hydroxyethyl)-4-methylthiazole: step 1/1.</text>
</comment>
<comment type="similarity">
    <text evidence="1">Belongs to the Thz kinase family.</text>
</comment>
<protein>
    <recommendedName>
        <fullName evidence="1">Hydroxyethylthiazole kinase</fullName>
        <ecNumber evidence="1">2.7.1.50</ecNumber>
    </recommendedName>
    <alternativeName>
        <fullName evidence="1">4-methyl-5-beta-hydroxyethylthiazole kinase</fullName>
        <shortName evidence="1">TH kinase</shortName>
        <shortName evidence="1">Thz kinase</shortName>
    </alternativeName>
</protein>
<dbReference type="EC" id="2.7.1.50" evidence="1"/>
<dbReference type="EMBL" id="CP000671">
    <property type="protein sequence ID" value="ABQ97674.1"/>
    <property type="molecule type" value="Genomic_DNA"/>
</dbReference>
<dbReference type="SMR" id="A5UA73"/>
<dbReference type="KEGG" id="hip:CGSHiEE_00920"/>
<dbReference type="HOGENOM" id="CLU_019943_0_0_6"/>
<dbReference type="UniPathway" id="UPA00060">
    <property type="reaction ID" value="UER00139"/>
</dbReference>
<dbReference type="GO" id="GO:0005524">
    <property type="term" value="F:ATP binding"/>
    <property type="evidence" value="ECO:0007669"/>
    <property type="project" value="UniProtKB-UniRule"/>
</dbReference>
<dbReference type="GO" id="GO:0004417">
    <property type="term" value="F:hydroxyethylthiazole kinase activity"/>
    <property type="evidence" value="ECO:0007669"/>
    <property type="project" value="UniProtKB-UniRule"/>
</dbReference>
<dbReference type="GO" id="GO:0000287">
    <property type="term" value="F:magnesium ion binding"/>
    <property type="evidence" value="ECO:0007669"/>
    <property type="project" value="UniProtKB-UniRule"/>
</dbReference>
<dbReference type="GO" id="GO:0009228">
    <property type="term" value="P:thiamine biosynthetic process"/>
    <property type="evidence" value="ECO:0007669"/>
    <property type="project" value="UniProtKB-KW"/>
</dbReference>
<dbReference type="GO" id="GO:0009229">
    <property type="term" value="P:thiamine diphosphate biosynthetic process"/>
    <property type="evidence" value="ECO:0007669"/>
    <property type="project" value="UniProtKB-UniRule"/>
</dbReference>
<dbReference type="CDD" id="cd01170">
    <property type="entry name" value="THZ_kinase"/>
    <property type="match status" value="1"/>
</dbReference>
<dbReference type="Gene3D" id="3.40.1190.20">
    <property type="match status" value="1"/>
</dbReference>
<dbReference type="HAMAP" id="MF_00228">
    <property type="entry name" value="Thz_kinase"/>
    <property type="match status" value="1"/>
</dbReference>
<dbReference type="InterPro" id="IPR000417">
    <property type="entry name" value="Hyethyz_kinase"/>
</dbReference>
<dbReference type="InterPro" id="IPR029056">
    <property type="entry name" value="Ribokinase-like"/>
</dbReference>
<dbReference type="NCBIfam" id="NF006830">
    <property type="entry name" value="PRK09355.1"/>
    <property type="match status" value="1"/>
</dbReference>
<dbReference type="NCBIfam" id="TIGR00694">
    <property type="entry name" value="thiM"/>
    <property type="match status" value="1"/>
</dbReference>
<dbReference type="Pfam" id="PF02110">
    <property type="entry name" value="HK"/>
    <property type="match status" value="1"/>
</dbReference>
<dbReference type="PIRSF" id="PIRSF000513">
    <property type="entry name" value="Thz_kinase"/>
    <property type="match status" value="1"/>
</dbReference>
<dbReference type="PRINTS" id="PR01099">
    <property type="entry name" value="HYETHTZKNASE"/>
</dbReference>
<dbReference type="SUPFAM" id="SSF53613">
    <property type="entry name" value="Ribokinase-like"/>
    <property type="match status" value="1"/>
</dbReference>